<gene>
    <name evidence="1" type="primary">pptA</name>
    <name type="ordered locus">EcSMS35_1713</name>
</gene>
<dbReference type="EC" id="5.3.2.-" evidence="1"/>
<dbReference type="EMBL" id="CP000970">
    <property type="protein sequence ID" value="ACB15853.1"/>
    <property type="molecule type" value="Genomic_DNA"/>
</dbReference>
<dbReference type="RefSeq" id="WP_001120146.1">
    <property type="nucleotide sequence ID" value="NC_010498.1"/>
</dbReference>
<dbReference type="SMR" id="B1LFF6"/>
<dbReference type="KEGG" id="ecm:EcSMS35_1713"/>
<dbReference type="HOGENOM" id="CLU_183611_0_1_6"/>
<dbReference type="Proteomes" id="UP000007011">
    <property type="component" value="Chromosome"/>
</dbReference>
<dbReference type="GO" id="GO:0005737">
    <property type="term" value="C:cytoplasm"/>
    <property type="evidence" value="ECO:0007669"/>
    <property type="project" value="UniProtKB-SubCell"/>
</dbReference>
<dbReference type="GO" id="GO:0016862">
    <property type="term" value="F:intramolecular oxidoreductase activity, interconverting keto- and enol-groups"/>
    <property type="evidence" value="ECO:0007669"/>
    <property type="project" value="UniProtKB-UniRule"/>
</dbReference>
<dbReference type="Gene3D" id="3.30.429.10">
    <property type="entry name" value="Macrophage Migration Inhibitory Factor"/>
    <property type="match status" value="1"/>
</dbReference>
<dbReference type="HAMAP" id="MF_00718">
    <property type="entry name" value="Tautomerase_PptA"/>
    <property type="match status" value="1"/>
</dbReference>
<dbReference type="InterPro" id="IPR004370">
    <property type="entry name" value="4-OT-like_dom"/>
</dbReference>
<dbReference type="InterPro" id="IPR014347">
    <property type="entry name" value="Tautomerase/MIF_sf"/>
</dbReference>
<dbReference type="InterPro" id="IPR017284">
    <property type="entry name" value="Tautomerase_PptA"/>
</dbReference>
<dbReference type="NCBIfam" id="NF002324">
    <property type="entry name" value="PRK01271.1"/>
    <property type="match status" value="1"/>
</dbReference>
<dbReference type="Pfam" id="PF01361">
    <property type="entry name" value="Tautomerase"/>
    <property type="match status" value="1"/>
</dbReference>
<dbReference type="PIRSF" id="PIRSF037799">
    <property type="entry name" value="Tautomer_YdcE_prd"/>
    <property type="match status" value="1"/>
</dbReference>
<dbReference type="SUPFAM" id="SSF55331">
    <property type="entry name" value="Tautomerase/MIF"/>
    <property type="match status" value="1"/>
</dbReference>
<reference key="1">
    <citation type="journal article" date="2008" name="J. Bacteriol.">
        <title>Insights into the environmental resistance gene pool from the genome sequence of the multidrug-resistant environmental isolate Escherichia coli SMS-3-5.</title>
        <authorList>
            <person name="Fricke W.F."/>
            <person name="Wright M.S."/>
            <person name="Lindell A.H."/>
            <person name="Harkins D.M."/>
            <person name="Baker-Austin C."/>
            <person name="Ravel J."/>
            <person name="Stepanauskas R."/>
        </authorList>
    </citation>
    <scope>NUCLEOTIDE SEQUENCE [LARGE SCALE GENOMIC DNA]</scope>
    <source>
        <strain>SMS-3-5 / SECEC</strain>
    </source>
</reference>
<proteinExistence type="inferred from homology"/>
<evidence type="ECO:0000255" key="1">
    <source>
        <dbReference type="HAMAP-Rule" id="MF_00718"/>
    </source>
</evidence>
<organism>
    <name type="scientific">Escherichia coli (strain SMS-3-5 / SECEC)</name>
    <dbReference type="NCBI Taxonomy" id="439855"/>
    <lineage>
        <taxon>Bacteria</taxon>
        <taxon>Pseudomonadati</taxon>
        <taxon>Pseudomonadota</taxon>
        <taxon>Gammaproteobacteria</taxon>
        <taxon>Enterobacterales</taxon>
        <taxon>Enterobacteriaceae</taxon>
        <taxon>Escherichia</taxon>
    </lineage>
</organism>
<accession>B1LFF6</accession>
<keyword id="KW-0963">Cytoplasm</keyword>
<keyword id="KW-0413">Isomerase</keyword>
<comment type="subunit">
    <text evidence="1">Homodimer.</text>
</comment>
<comment type="subcellular location">
    <subcellularLocation>
        <location evidence="1">Cytoplasm</location>
    </subcellularLocation>
</comment>
<comment type="similarity">
    <text evidence="1">Belongs to the 4-oxalocrotonate tautomerase family. PptA subfamily.</text>
</comment>
<feature type="initiator methionine" description="Removed" evidence="1">
    <location>
        <position position="1"/>
    </location>
</feature>
<feature type="chain" id="PRO_0000348342" description="Tautomerase PptA">
    <location>
        <begin position="2"/>
        <end position="75"/>
    </location>
</feature>
<feature type="active site" description="Proton acceptor; via imino nitrogen" evidence="1">
    <location>
        <position position="2"/>
    </location>
</feature>
<protein>
    <recommendedName>
        <fullName evidence="1">Tautomerase PptA</fullName>
        <ecNumber evidence="1">5.3.2.-</ecNumber>
    </recommendedName>
</protein>
<sequence length="75" mass="8548">MPHIDIKCFPRELDEQQKAALAADITDVIIRHLNSKDSSISIALQQIQPESWQAIWDTEIAPQMETLIKKPGYSM</sequence>
<name>PPTA_ECOSM</name>